<gene>
    <name type="primary">INP1</name>
    <name type="ordered locus">YMR204C</name>
    <name type="ORF">YM8325.05C</name>
</gene>
<sequence>MVLSRGETKKNSVRLTAKQEKKPQSTFQTLKQSLKLSNNKKLKQDSTQHSNDTNKSVKAKKNGTSSKKTGTQRKRISTQRFSLFTYGNVQVMNSFVPIHNDIPNSSCIRRNSQVSANNVTESSGVFFNDTQSQDSQNTIKLKPTSLMAKGPIEIYQICTGFDKLKENIAPFQKSSKASSHDGHVVNYLSIGRHGDIVHPVLPKLQITRLNGAGFKYFISFYNPERYWEIEFLPLISQSQSELENSVKAFENVISKICQFSHINEGATIGNNESLSDKFKLPPTSDIEPPNTEIINNDDDNDDDDDNYDDDDLNYLLDEEYEQGCTDNSFSVISNTCSNLNASFLYPSDPTDAVSISINEAFKNAIRRTAPVLNIPIAAPSIHSKQQNKRYSSYPFIDSPPYLQDRHRRFQRRSISGLGDL</sequence>
<dbReference type="EMBL" id="Z48755">
    <property type="protein sequence ID" value="CAA88645.1"/>
    <property type="molecule type" value="Genomic_DNA"/>
</dbReference>
<dbReference type="EMBL" id="BK006946">
    <property type="protein sequence ID" value="DAA10103.1"/>
    <property type="molecule type" value="Genomic_DNA"/>
</dbReference>
<dbReference type="PIR" id="S59445">
    <property type="entry name" value="S59445"/>
</dbReference>
<dbReference type="RefSeq" id="NP_013931.1">
    <property type="nucleotide sequence ID" value="NM_001182711.1"/>
</dbReference>
<dbReference type="SMR" id="Q03694"/>
<dbReference type="BioGRID" id="35382">
    <property type="interactions" value="78"/>
</dbReference>
<dbReference type="DIP" id="DIP-4415N"/>
<dbReference type="FunCoup" id="Q03694">
    <property type="interactions" value="33"/>
</dbReference>
<dbReference type="IntAct" id="Q03694">
    <property type="interactions" value="5"/>
</dbReference>
<dbReference type="MINT" id="Q03694"/>
<dbReference type="STRING" id="4932.YMR204C"/>
<dbReference type="iPTMnet" id="Q03694"/>
<dbReference type="PaxDb" id="4932-YMR204C"/>
<dbReference type="PeptideAtlas" id="Q03694"/>
<dbReference type="EnsemblFungi" id="YMR204C_mRNA">
    <property type="protein sequence ID" value="YMR204C"/>
    <property type="gene ID" value="YMR204C"/>
</dbReference>
<dbReference type="GeneID" id="855244"/>
<dbReference type="KEGG" id="sce:YMR204C"/>
<dbReference type="AGR" id="SGD:S000004817"/>
<dbReference type="SGD" id="S000004817">
    <property type="gene designation" value="INP1"/>
</dbReference>
<dbReference type="VEuPathDB" id="FungiDB:YMR204C"/>
<dbReference type="eggNOG" id="ENOG502S7ZC">
    <property type="taxonomic scope" value="Eukaryota"/>
</dbReference>
<dbReference type="HOGENOM" id="CLU_056604_0_0_1"/>
<dbReference type="InParanoid" id="Q03694"/>
<dbReference type="OMA" id="RFWEIEF"/>
<dbReference type="OrthoDB" id="4068391at2759"/>
<dbReference type="BioCyc" id="YEAST:G3O-32890-MONOMER"/>
<dbReference type="BioGRID-ORCS" id="855244">
    <property type="hits" value="1 hit in 10 CRISPR screens"/>
</dbReference>
<dbReference type="PRO" id="PR:Q03694"/>
<dbReference type="Proteomes" id="UP000002311">
    <property type="component" value="Chromosome XIII"/>
</dbReference>
<dbReference type="RNAct" id="Q03694">
    <property type="molecule type" value="protein"/>
</dbReference>
<dbReference type="GO" id="GO:0005780">
    <property type="term" value="C:extrinsic component of intraperoxisomal membrane"/>
    <property type="evidence" value="ECO:0007669"/>
    <property type="project" value="InterPro"/>
</dbReference>
<dbReference type="GO" id="GO:0005777">
    <property type="term" value="C:peroxisome"/>
    <property type="evidence" value="ECO:0000314"/>
    <property type="project" value="SGD"/>
</dbReference>
<dbReference type="GO" id="GO:0030674">
    <property type="term" value="F:protein-macromolecule adaptor activity"/>
    <property type="evidence" value="ECO:0000315"/>
    <property type="project" value="SGD"/>
</dbReference>
<dbReference type="GO" id="GO:0045033">
    <property type="term" value="P:peroxisome inheritance"/>
    <property type="evidence" value="ECO:0000315"/>
    <property type="project" value="SGD"/>
</dbReference>
<dbReference type="InterPro" id="IPR024758">
    <property type="entry name" value="Inp1"/>
</dbReference>
<dbReference type="Pfam" id="PF12634">
    <property type="entry name" value="Inp1"/>
    <property type="match status" value="1"/>
</dbReference>
<dbReference type="PRINTS" id="PR02103">
    <property type="entry name" value="INPROXISOME1"/>
</dbReference>
<proteinExistence type="evidence at protein level"/>
<reference key="1">
    <citation type="journal article" date="1997" name="Nature">
        <title>The nucleotide sequence of Saccharomyces cerevisiae chromosome XIII.</title>
        <authorList>
            <person name="Bowman S."/>
            <person name="Churcher C.M."/>
            <person name="Badcock K."/>
            <person name="Brown D."/>
            <person name="Chillingworth T."/>
            <person name="Connor R."/>
            <person name="Dedman K."/>
            <person name="Devlin K."/>
            <person name="Gentles S."/>
            <person name="Hamlin N."/>
            <person name="Hunt S."/>
            <person name="Jagels K."/>
            <person name="Lye G."/>
            <person name="Moule S."/>
            <person name="Odell C."/>
            <person name="Pearson D."/>
            <person name="Rajandream M.A."/>
            <person name="Rice P."/>
            <person name="Skelton J."/>
            <person name="Walsh S.V."/>
            <person name="Whitehead S."/>
            <person name="Barrell B.G."/>
        </authorList>
    </citation>
    <scope>NUCLEOTIDE SEQUENCE [LARGE SCALE GENOMIC DNA]</scope>
    <source>
        <strain>ATCC 204508 / S288c</strain>
    </source>
</reference>
<reference key="2">
    <citation type="journal article" date="2014" name="G3 (Bethesda)">
        <title>The reference genome sequence of Saccharomyces cerevisiae: Then and now.</title>
        <authorList>
            <person name="Engel S.R."/>
            <person name="Dietrich F.S."/>
            <person name="Fisk D.G."/>
            <person name="Binkley G."/>
            <person name="Balakrishnan R."/>
            <person name="Costanzo M.C."/>
            <person name="Dwight S.S."/>
            <person name="Hitz B.C."/>
            <person name="Karra K."/>
            <person name="Nash R.S."/>
            <person name="Weng S."/>
            <person name="Wong E.D."/>
            <person name="Lloyd P."/>
            <person name="Skrzypek M.S."/>
            <person name="Miyasato S.R."/>
            <person name="Simison M."/>
            <person name="Cherry J.M."/>
        </authorList>
    </citation>
    <scope>GENOME REANNOTATION</scope>
    <source>
        <strain>ATCC 204508 / S288c</strain>
    </source>
</reference>
<reference key="3">
    <citation type="journal article" date="2003" name="Nature">
        <title>Global analysis of protein localization in budding yeast.</title>
        <authorList>
            <person name="Huh W.-K."/>
            <person name="Falvo J.V."/>
            <person name="Gerke L.C."/>
            <person name="Carroll A.S."/>
            <person name="Howson R.W."/>
            <person name="Weissman J.S."/>
            <person name="O'Shea E.K."/>
        </authorList>
    </citation>
    <scope>SUBCELLULAR LOCATION [LARGE SCALE ANALYSIS]</scope>
</reference>
<reference key="4">
    <citation type="journal article" date="2003" name="Nature">
        <title>Global analysis of protein expression in yeast.</title>
        <authorList>
            <person name="Ghaemmaghami S."/>
            <person name="Huh W.-K."/>
            <person name="Bower K."/>
            <person name="Howson R.W."/>
            <person name="Belle A."/>
            <person name="Dephoure N."/>
            <person name="O'Shea E.K."/>
            <person name="Weissman J.S."/>
        </authorList>
    </citation>
    <scope>LEVEL OF PROTEIN EXPRESSION [LARGE SCALE ANALYSIS]</scope>
</reference>
<reference key="5">
    <citation type="journal article" date="2005" name="J. Cell Biol.">
        <title>Inp1p is a peroxisomal membrane protein required for peroxisome inheritance in Saccharomyces cerevisiae.</title>
        <authorList>
            <person name="Fagarasanu M."/>
            <person name="Fagarasanu A."/>
            <person name="Tam Y.Y.C."/>
            <person name="Aitchison J.D."/>
            <person name="Rachubinski R.A."/>
        </authorList>
    </citation>
    <scope>FUNCTION</scope>
    <scope>SUBCELLULAR LOCATION</scope>
    <scope>INTERACTION WITH PEX25; PEX30 AND VPS1</scope>
</reference>
<reference key="6">
    <citation type="journal article" date="2006" name="Dev. Cell">
        <title>The peroxisomal membrane protein Inp2p is the peroxisome-specific receptor for the myosin V motor Myo2p of Saccharomyces cerevisiae.</title>
        <authorList>
            <person name="Fagarasanu A."/>
            <person name="Fagarasanu M."/>
            <person name="Eitzen G.A."/>
            <person name="Aitchison J.D."/>
            <person name="Rachubinski R.A."/>
        </authorList>
    </citation>
    <scope>FUNCTION</scope>
</reference>
<reference key="7">
    <citation type="journal article" date="2007" name="J. Proteome Res.">
        <title>Large-scale phosphorylation analysis of alpha-factor-arrested Saccharomyces cerevisiae.</title>
        <authorList>
            <person name="Li X."/>
            <person name="Gerber S.A."/>
            <person name="Rudner A.D."/>
            <person name="Beausoleil S.A."/>
            <person name="Haas W."/>
            <person name="Villen J."/>
            <person name="Elias J.E."/>
            <person name="Gygi S.P."/>
        </authorList>
    </citation>
    <scope>PHOSPHORYLATION [LARGE SCALE ANALYSIS] AT SER-273</scope>
    <scope>IDENTIFICATION BY MASS SPECTROMETRY [LARGE SCALE ANALYSIS]</scope>
    <source>
        <strain>ADR376</strain>
    </source>
</reference>
<reference key="8">
    <citation type="journal article" date="2009" name="Science">
        <title>Global analysis of Cdk1 substrate phosphorylation sites provides insights into evolution.</title>
        <authorList>
            <person name="Holt L.J."/>
            <person name="Tuch B.B."/>
            <person name="Villen J."/>
            <person name="Johnson A.D."/>
            <person name="Gygi S.P."/>
            <person name="Morgan D.O."/>
        </authorList>
    </citation>
    <scope>IDENTIFICATION BY MASS SPECTROMETRY [LARGE SCALE ANALYSIS]</scope>
</reference>
<organism>
    <name type="scientific">Saccharomyces cerevisiae (strain ATCC 204508 / S288c)</name>
    <name type="common">Baker's yeast</name>
    <dbReference type="NCBI Taxonomy" id="559292"/>
    <lineage>
        <taxon>Eukaryota</taxon>
        <taxon>Fungi</taxon>
        <taxon>Dikarya</taxon>
        <taxon>Ascomycota</taxon>
        <taxon>Saccharomycotina</taxon>
        <taxon>Saccharomycetes</taxon>
        <taxon>Saccharomycetales</taxon>
        <taxon>Saccharomycetaceae</taxon>
        <taxon>Saccharomyces</taxon>
    </lineage>
</organism>
<comment type="function">
    <text evidence="4 5">Required for peroxisome inheritance.</text>
</comment>
<comment type="subunit">
    <text evidence="4">Interacts with PEX25, PEX30 and VPS1.</text>
</comment>
<comment type="interaction">
    <interactant intactId="EBI-27445">
        <id>Q03694</id>
    </interactant>
    <interactant intactId="EBI-13164">
        <id>P28795</id>
        <label>PEX3</label>
    </interactant>
    <organismsDiffer>false</organismsDiffer>
    <experiments>6</experiments>
</comment>
<comment type="subcellular location">
    <subcellularLocation>
        <location evidence="2 4">Peroxisome membrane</location>
        <topology evidence="2 4">Peripheral membrane protein</topology>
    </subcellularLocation>
</comment>
<comment type="miscellaneous">
    <text evidence="3">Present with 639 molecules/cell in log phase SD medium.</text>
</comment>
<comment type="similarity">
    <text evidence="6">Belongs to the INP1 family.</text>
</comment>
<evidence type="ECO:0000256" key="1">
    <source>
        <dbReference type="SAM" id="MobiDB-lite"/>
    </source>
</evidence>
<evidence type="ECO:0000269" key="2">
    <source>
    </source>
</evidence>
<evidence type="ECO:0000269" key="3">
    <source>
    </source>
</evidence>
<evidence type="ECO:0000269" key="4">
    <source>
    </source>
</evidence>
<evidence type="ECO:0000269" key="5">
    <source>
    </source>
</evidence>
<evidence type="ECO:0000305" key="6"/>
<evidence type="ECO:0007744" key="7">
    <source>
    </source>
</evidence>
<feature type="chain" id="PRO_0000203328" description="Inheritance of peroxisomes protein 1">
    <location>
        <begin position="1"/>
        <end position="420"/>
    </location>
</feature>
<feature type="region of interest" description="Disordered" evidence="1">
    <location>
        <begin position="1"/>
        <end position="75"/>
    </location>
</feature>
<feature type="region of interest" description="Disordered" evidence="1">
    <location>
        <begin position="273"/>
        <end position="309"/>
    </location>
</feature>
<feature type="compositionally biased region" description="Basic and acidic residues" evidence="1">
    <location>
        <begin position="1"/>
        <end position="10"/>
    </location>
</feature>
<feature type="compositionally biased region" description="Low complexity" evidence="1">
    <location>
        <begin position="30"/>
        <end position="39"/>
    </location>
</feature>
<feature type="compositionally biased region" description="Polar residues" evidence="1">
    <location>
        <begin position="45"/>
        <end position="56"/>
    </location>
</feature>
<feature type="compositionally biased region" description="Acidic residues" evidence="1">
    <location>
        <begin position="295"/>
        <end position="309"/>
    </location>
</feature>
<feature type="modified residue" description="Phosphoserine" evidence="7">
    <location>
        <position position="273"/>
    </location>
</feature>
<accession>Q03694</accession>
<accession>D6W029</accession>
<protein>
    <recommendedName>
        <fullName>Inheritance of peroxisomes protein 1</fullName>
    </recommendedName>
</protein>
<name>INP1_YEAST</name>
<keyword id="KW-0472">Membrane</keyword>
<keyword id="KW-0576">Peroxisome</keyword>
<keyword id="KW-0597">Phosphoprotein</keyword>
<keyword id="KW-1185">Reference proteome</keyword>